<protein>
    <recommendedName>
        <fullName evidence="1">Large ribosomal subunit protein bL21</fullName>
    </recommendedName>
    <alternativeName>
        <fullName evidence="2">50S ribosomal protein L21</fullName>
    </alternativeName>
</protein>
<sequence>MYAIIKNGGKQYKVKEGDIICFDKMGLEPKTKVEFKEVLAVDNGELKVGTPFVEGAVVEGEVINEGRGKKVIIFKKRRRKDSKVKRGFRRDFTRVKITAINA</sequence>
<reference key="1">
    <citation type="journal article" date="2007" name="Proc. Natl. Acad. Sci. U.S.A.">
        <title>Deep-sea vent epsilon-proteobacterial genomes provide insights into emergence of pathogens.</title>
        <authorList>
            <person name="Nakagawa S."/>
            <person name="Takaki Y."/>
            <person name="Shimamura S."/>
            <person name="Reysenbach A.-L."/>
            <person name="Takai K."/>
            <person name="Horikoshi K."/>
        </authorList>
    </citation>
    <scope>NUCLEOTIDE SEQUENCE [LARGE SCALE GENOMIC DNA]</scope>
    <source>
        <strain>SB155-2</strain>
    </source>
</reference>
<feature type="chain" id="PRO_1000067863" description="Large ribosomal subunit protein bL21">
    <location>
        <begin position="1"/>
        <end position="102"/>
    </location>
</feature>
<keyword id="KW-1185">Reference proteome</keyword>
<keyword id="KW-0687">Ribonucleoprotein</keyword>
<keyword id="KW-0689">Ribosomal protein</keyword>
<keyword id="KW-0694">RNA-binding</keyword>
<keyword id="KW-0699">rRNA-binding</keyword>
<evidence type="ECO:0000255" key="1">
    <source>
        <dbReference type="HAMAP-Rule" id="MF_01363"/>
    </source>
</evidence>
<evidence type="ECO:0000305" key="2"/>
<organism>
    <name type="scientific">Nitratiruptor sp. (strain SB155-2)</name>
    <dbReference type="NCBI Taxonomy" id="387092"/>
    <lineage>
        <taxon>Bacteria</taxon>
        <taxon>Pseudomonadati</taxon>
        <taxon>Campylobacterota</taxon>
        <taxon>Epsilonproteobacteria</taxon>
        <taxon>Nautiliales</taxon>
        <taxon>Nitratiruptoraceae</taxon>
        <taxon>Nitratiruptor</taxon>
    </lineage>
</organism>
<proteinExistence type="inferred from homology"/>
<dbReference type="EMBL" id="AP009178">
    <property type="protein sequence ID" value="BAF70343.1"/>
    <property type="molecule type" value="Genomic_DNA"/>
</dbReference>
<dbReference type="RefSeq" id="WP_012082606.1">
    <property type="nucleotide sequence ID" value="NC_009662.1"/>
</dbReference>
<dbReference type="SMR" id="A6Q4D4"/>
<dbReference type="FunCoup" id="A6Q4D4">
    <property type="interactions" value="515"/>
</dbReference>
<dbReference type="STRING" id="387092.NIS_1234"/>
<dbReference type="KEGG" id="nis:NIS_1234"/>
<dbReference type="eggNOG" id="COG0261">
    <property type="taxonomic scope" value="Bacteria"/>
</dbReference>
<dbReference type="HOGENOM" id="CLU_061463_3_1_7"/>
<dbReference type="InParanoid" id="A6Q4D4"/>
<dbReference type="OrthoDB" id="9813334at2"/>
<dbReference type="Proteomes" id="UP000001118">
    <property type="component" value="Chromosome"/>
</dbReference>
<dbReference type="GO" id="GO:0005737">
    <property type="term" value="C:cytoplasm"/>
    <property type="evidence" value="ECO:0007669"/>
    <property type="project" value="UniProtKB-ARBA"/>
</dbReference>
<dbReference type="GO" id="GO:1990904">
    <property type="term" value="C:ribonucleoprotein complex"/>
    <property type="evidence" value="ECO:0007669"/>
    <property type="project" value="UniProtKB-KW"/>
</dbReference>
<dbReference type="GO" id="GO:0005840">
    <property type="term" value="C:ribosome"/>
    <property type="evidence" value="ECO:0007669"/>
    <property type="project" value="UniProtKB-KW"/>
</dbReference>
<dbReference type="GO" id="GO:0019843">
    <property type="term" value="F:rRNA binding"/>
    <property type="evidence" value="ECO:0007669"/>
    <property type="project" value="UniProtKB-UniRule"/>
</dbReference>
<dbReference type="GO" id="GO:0003735">
    <property type="term" value="F:structural constituent of ribosome"/>
    <property type="evidence" value="ECO:0007669"/>
    <property type="project" value="InterPro"/>
</dbReference>
<dbReference type="GO" id="GO:0006412">
    <property type="term" value="P:translation"/>
    <property type="evidence" value="ECO:0007669"/>
    <property type="project" value="UniProtKB-UniRule"/>
</dbReference>
<dbReference type="HAMAP" id="MF_01363">
    <property type="entry name" value="Ribosomal_bL21"/>
    <property type="match status" value="1"/>
</dbReference>
<dbReference type="InterPro" id="IPR028909">
    <property type="entry name" value="bL21-like"/>
</dbReference>
<dbReference type="InterPro" id="IPR036164">
    <property type="entry name" value="bL21-like_sf"/>
</dbReference>
<dbReference type="InterPro" id="IPR001787">
    <property type="entry name" value="Ribosomal_bL21"/>
</dbReference>
<dbReference type="InterPro" id="IPR018258">
    <property type="entry name" value="Ribosomal_bL21_CS"/>
</dbReference>
<dbReference type="NCBIfam" id="TIGR00061">
    <property type="entry name" value="L21"/>
    <property type="match status" value="1"/>
</dbReference>
<dbReference type="PANTHER" id="PTHR21349">
    <property type="entry name" value="50S RIBOSOMAL PROTEIN L21"/>
    <property type="match status" value="1"/>
</dbReference>
<dbReference type="PANTHER" id="PTHR21349:SF0">
    <property type="entry name" value="LARGE RIBOSOMAL SUBUNIT PROTEIN BL21M"/>
    <property type="match status" value="1"/>
</dbReference>
<dbReference type="Pfam" id="PF00829">
    <property type="entry name" value="Ribosomal_L21p"/>
    <property type="match status" value="1"/>
</dbReference>
<dbReference type="SUPFAM" id="SSF141091">
    <property type="entry name" value="L21p-like"/>
    <property type="match status" value="1"/>
</dbReference>
<dbReference type="PROSITE" id="PS01169">
    <property type="entry name" value="RIBOSOMAL_L21"/>
    <property type="match status" value="1"/>
</dbReference>
<comment type="function">
    <text evidence="1">This protein binds to 23S rRNA in the presence of protein L20.</text>
</comment>
<comment type="subunit">
    <text evidence="1">Part of the 50S ribosomal subunit. Contacts protein L20.</text>
</comment>
<comment type="similarity">
    <text evidence="1">Belongs to the bacterial ribosomal protein bL21 family.</text>
</comment>
<accession>A6Q4D4</accession>
<gene>
    <name evidence="1" type="primary">rplU</name>
    <name type="ordered locus">NIS_1234</name>
</gene>
<name>RL21_NITSB</name>